<comment type="function">
    <text evidence="5 6">Endonuclease that probably plays a role in the DNA damage response and DNA repair.</text>
</comment>
<comment type="subunit">
    <text evidence="5">Interacts (via LEM domain) with BANF1; the interaction may favor BANF1 dimerization.</text>
</comment>
<comment type="interaction">
    <interactant intactId="EBI-27052251">
        <id>Q8NAG6-2</id>
    </interactant>
    <interactant intactId="EBI-1055977">
        <id>O75531</id>
        <label>BANF1</label>
    </interactant>
    <organismsDiffer>false</organismsDiffer>
    <experiments>2</experiments>
</comment>
<comment type="subcellular location">
    <subcellularLocation>
        <location evidence="5 6">Cytoplasm</location>
    </subcellularLocation>
    <subcellularLocation>
        <location evidence="5 6">Nucleus</location>
    </subcellularLocation>
    <text evidence="5 6">At the steady state, localizes predominantly in the cytoplasm.</text>
</comment>
<comment type="alternative products">
    <event type="alternative splicing"/>
    <isoform>
        <id>Q8NAG6-2</id>
        <name>1</name>
        <sequence type="displayed"/>
    </isoform>
    <isoform>
        <id>Q8NAG6-1</id>
        <name>2</name>
        <sequence type="described" ref="VSP_039879 VSP_039880"/>
    </isoform>
</comment>
<comment type="tissue specificity">
    <text evidence="5">Expression is predominant in adult bone marrow.</text>
</comment>
<comment type="developmental stage">
    <text evidence="5">Expressed in fetal spleen, liver and thymus.</text>
</comment>
<comment type="domain">
    <text evidence="5">The LEM domain is required for GIY-YIG domain-mediated DNA cleavage and induction of DNA damage response.</text>
</comment>
<comment type="sequence caution" evidence="9">
    <conflict type="erroneous initiation">
        <sequence resource="EMBL-CDS" id="BAC04840"/>
    </conflict>
    <text>Truncated N-terminus.</text>
</comment>
<protein>
    <recommendedName>
        <fullName>Ankyrin repeat and LEM domain-containing protein 1</fullName>
        <ecNumber evidence="5">3.1.-.-</ecNumber>
    </recommendedName>
    <alternativeName>
        <fullName>Ankyrin repeat domain-containing protein 41</fullName>
    </alternativeName>
    <alternativeName>
        <fullName>LEM-domain containing protein 3</fullName>
    </alternativeName>
</protein>
<feature type="chain" id="PRO_0000244370" description="Ankyrin repeat and LEM domain-containing protein 1">
    <location>
        <begin position="1"/>
        <end position="615"/>
    </location>
</feature>
<feature type="repeat" description="ANK 1">
    <location>
        <begin position="39"/>
        <end position="71"/>
    </location>
</feature>
<feature type="repeat" description="ANK 2">
    <location>
        <begin position="75"/>
        <end position="104"/>
    </location>
</feature>
<feature type="repeat" description="ANK 3">
    <location>
        <begin position="108"/>
        <end position="137"/>
    </location>
</feature>
<feature type="domain" description="LEM" evidence="1">
    <location>
        <begin position="355"/>
        <end position="399"/>
    </location>
</feature>
<feature type="domain" description="GIY-YIG" evidence="2">
    <location>
        <begin position="448"/>
        <end position="566"/>
    </location>
</feature>
<feature type="region of interest" description="Disordered" evidence="3">
    <location>
        <begin position="138"/>
        <end position="210"/>
    </location>
</feature>
<feature type="region of interest" description="Disordered" evidence="3">
    <location>
        <begin position="283"/>
        <end position="315"/>
    </location>
</feature>
<feature type="short sequence motif" description="Nuclear export signal" evidence="6">
    <location>
        <begin position="271"/>
        <end position="280"/>
    </location>
</feature>
<feature type="short sequence motif" description="Nuclear localization signal" evidence="6">
    <location>
        <begin position="579"/>
        <end position="586"/>
    </location>
</feature>
<feature type="compositionally biased region" description="Polar residues" evidence="3">
    <location>
        <begin position="283"/>
        <end position="294"/>
    </location>
</feature>
<feature type="splice variant" id="VSP_039879" description="In isoform 2." evidence="8">
    <original>MCSEARLARRLRDALREEEPWA</original>
    <variation>MRCGRRSR</variation>
    <location>
        <begin position="1"/>
        <end position="22"/>
    </location>
</feature>
<feature type="splice variant" id="VSP_039880" description="In isoform 2." evidence="8">
    <location>
        <begin position="374"/>
        <end position="399"/>
    </location>
</feature>
<feature type="sequence variant" id="VAR_063681" description="In dbSNP:rs8100241." evidence="7">
    <original>A</original>
    <variation>T</variation>
    <location>
        <position position="31"/>
    </location>
</feature>
<feature type="sequence variant" id="VAR_063682" description="In dbSNP:rs1864116." evidence="4 7">
    <original>A</original>
    <variation>V</variation>
    <location>
        <position position="71"/>
    </location>
</feature>
<feature type="sequence variant" id="VAR_033507" description="In dbSNP:rs8108174." evidence="7">
    <original>L</original>
    <variation>Q</variation>
    <location>
        <position position="94"/>
    </location>
</feature>
<feature type="sequence variant" id="VAR_061015" description="In dbSNP:rs59119993.">
    <original>P</original>
    <variation>S</variation>
    <location>
        <position position="160"/>
    </location>
</feature>
<feature type="sequence variant" id="VAR_033508" description="In dbSNP:rs2363956." evidence="7">
    <original>L</original>
    <variation>W</variation>
    <location>
        <position position="184"/>
    </location>
</feature>
<feature type="sequence variant" id="VAR_033509" description="In dbSNP:rs891017." evidence="4 7">
    <original>T</original>
    <variation>P</variation>
    <location>
        <position position="311"/>
    </location>
</feature>
<feature type="sequence variant" id="VAR_033510" description="In dbSNP:rs11086065." evidence="4 7">
    <original>Q</original>
    <variation>R</variation>
    <location>
        <position position="435"/>
    </location>
</feature>
<feature type="sequence variant" id="VAR_033511" description="In dbSNP:rs34112069.">
    <original>V</original>
    <variation>M</variation>
    <location>
        <position position="447"/>
    </location>
</feature>
<feature type="mutagenesis site" description="Slight increase in nuclear localization." evidence="6">
    <original>LRPLDLAL</original>
    <variation>ARPADAAA</variation>
    <location>
        <begin position="110"/>
        <end position="117"/>
    </location>
</feature>
<feature type="mutagenesis site" description="Increased nuclear localization." evidence="6">
    <original>LNARLQALTL</original>
    <variation>ANARAQAATA</variation>
    <location>
        <begin position="271"/>
        <end position="280"/>
    </location>
</feature>
<feature type="mutagenesis site" description="Loss of endonucleolytic activity." evidence="5">
    <original>Y</original>
    <variation>A</variation>
    <location>
        <position position="453"/>
    </location>
</feature>
<feature type="mutagenesis site" description="Probable loss of endonucleolytic activity. Fails to induce DNA damage response upon leptomycin-mediated nuclear localization. No nuclear translocation upon treatment with DNA damaging agents. Steady state cytoplasmic localization is not affected." evidence="6">
    <original>YVG</original>
    <variation>AAA</variation>
    <location>
        <begin position="486"/>
        <end position="488"/>
    </location>
</feature>
<feature type="mutagenesis site" description="Loss of endonucleolytic activity." evidence="5">
    <original>G</original>
    <variation>A</variation>
    <location>
        <position position="488"/>
    </location>
</feature>
<feature type="mutagenesis site" description="Loss of endonucleolytic activity." evidence="5">
    <original>E</original>
    <variation>A</variation>
    <location>
        <position position="551"/>
    </location>
</feature>
<feature type="sequence conflict" description="In Ref. 2; BAC03953." evidence="9" ref="2">
    <original>E</original>
    <variation>G</variation>
    <location>
        <position position="444"/>
    </location>
</feature>
<evidence type="ECO:0000255" key="1">
    <source>
        <dbReference type="PROSITE-ProRule" id="PRU00313"/>
    </source>
</evidence>
<evidence type="ECO:0000255" key="2">
    <source>
        <dbReference type="PROSITE-ProRule" id="PRU00977"/>
    </source>
</evidence>
<evidence type="ECO:0000256" key="3">
    <source>
        <dbReference type="SAM" id="MobiDB-lite"/>
    </source>
</evidence>
<evidence type="ECO:0000269" key="4">
    <source>
    </source>
</evidence>
<evidence type="ECO:0000269" key="5">
    <source>
    </source>
</evidence>
<evidence type="ECO:0000269" key="6">
    <source>
    </source>
</evidence>
<evidence type="ECO:0000269" key="7">
    <source ref="1"/>
</evidence>
<evidence type="ECO:0000303" key="8">
    <source>
    </source>
</evidence>
<evidence type="ECO:0000305" key="9"/>
<proteinExistence type="evidence at protein level"/>
<dbReference type="EC" id="3.1.-.-" evidence="5"/>
<dbReference type="EMBL" id="EU184013">
    <property type="protein sequence ID" value="ABW73565.1"/>
    <property type="molecule type" value="mRNA"/>
</dbReference>
<dbReference type="EMBL" id="AK092706">
    <property type="protein sequence ID" value="BAC03953.1"/>
    <property type="molecule type" value="mRNA"/>
</dbReference>
<dbReference type="EMBL" id="AK096688">
    <property type="protein sequence ID" value="BAC04840.1"/>
    <property type="status" value="ALT_INIT"/>
    <property type="molecule type" value="mRNA"/>
</dbReference>
<dbReference type="EMBL" id="AC010463">
    <property type="status" value="NOT_ANNOTATED_CDS"/>
    <property type="molecule type" value="Genomic_DNA"/>
</dbReference>
<dbReference type="CCDS" id="CCDS12354.4">
    <molecule id="Q8NAG6-2"/>
</dbReference>
<dbReference type="RefSeq" id="NP_001265372.1">
    <property type="nucleotide sequence ID" value="NM_001278443.1"/>
</dbReference>
<dbReference type="RefSeq" id="NP_001265374.2">
    <molecule id="Q8NAG6-1"/>
    <property type="nucleotide sequence ID" value="NM_001278445.2"/>
</dbReference>
<dbReference type="RefSeq" id="NP_689576.5">
    <molecule id="Q8NAG6-2"/>
    <property type="nucleotide sequence ID" value="NM_152363.5"/>
</dbReference>
<dbReference type="SMR" id="Q8NAG6"/>
<dbReference type="BioGRID" id="126001">
    <property type="interactions" value="3"/>
</dbReference>
<dbReference type="FunCoup" id="Q8NAG6">
    <property type="interactions" value="1430"/>
</dbReference>
<dbReference type="IntAct" id="Q8NAG6">
    <property type="interactions" value="1"/>
</dbReference>
<dbReference type="STRING" id="9606.ENSP00000377971"/>
<dbReference type="GlyGen" id="Q8NAG6">
    <property type="glycosylation" value="2 sites"/>
</dbReference>
<dbReference type="iPTMnet" id="Q8NAG6"/>
<dbReference type="PhosphoSitePlus" id="Q8NAG6"/>
<dbReference type="BioMuta" id="ANKLE1"/>
<dbReference type="DMDM" id="308153409"/>
<dbReference type="MassIVE" id="Q8NAG6"/>
<dbReference type="PaxDb" id="9606-ENSP00000377971"/>
<dbReference type="PeptideAtlas" id="Q8NAG6"/>
<dbReference type="ProteomicsDB" id="72677">
    <molecule id="Q8NAG6-2"/>
</dbReference>
<dbReference type="ProteomicsDB" id="72678">
    <molecule id="Q8NAG6-1"/>
</dbReference>
<dbReference type="Antibodypedia" id="27599">
    <property type="antibodies" value="39 antibodies from 22 providers"/>
</dbReference>
<dbReference type="DNASU" id="126549"/>
<dbReference type="Ensembl" id="ENST00000404085.7">
    <molecule id="Q8NAG6-2"/>
    <property type="protein sequence ID" value="ENSP00000384008.3"/>
    <property type="gene ID" value="ENSG00000160117.16"/>
</dbReference>
<dbReference type="GeneID" id="126549"/>
<dbReference type="KEGG" id="hsa:126549"/>
<dbReference type="MANE-Select" id="ENST00000404085.7">
    <property type="protein sequence ID" value="ENSP00000384008.3"/>
    <property type="RefSeq nucleotide sequence ID" value="NM_152363.6"/>
    <property type="RefSeq protein sequence ID" value="NP_689576.6"/>
</dbReference>
<dbReference type="UCSC" id="uc002nga.3">
    <molecule id="Q8NAG6-2"/>
    <property type="organism name" value="human"/>
</dbReference>
<dbReference type="AGR" id="HGNC:26812"/>
<dbReference type="CTD" id="126549"/>
<dbReference type="DisGeNET" id="126549"/>
<dbReference type="GeneCards" id="ANKLE1"/>
<dbReference type="HGNC" id="HGNC:26812">
    <property type="gene designation" value="ANKLE1"/>
</dbReference>
<dbReference type="HPA" id="ENSG00000160117">
    <property type="expression patterns" value="Tissue enriched (bone)"/>
</dbReference>
<dbReference type="MIM" id="619348">
    <property type="type" value="gene"/>
</dbReference>
<dbReference type="neXtProt" id="NX_Q8NAG6"/>
<dbReference type="OpenTargets" id="ENSG00000160117"/>
<dbReference type="PharmGKB" id="PA162376509"/>
<dbReference type="VEuPathDB" id="HostDB:ENSG00000160117"/>
<dbReference type="eggNOG" id="KOG4177">
    <property type="taxonomic scope" value="Eukaryota"/>
</dbReference>
<dbReference type="GeneTree" id="ENSGT00510000049316"/>
<dbReference type="InParanoid" id="Q8NAG6"/>
<dbReference type="OrthoDB" id="1601181at2759"/>
<dbReference type="PAN-GO" id="Q8NAG6">
    <property type="GO annotations" value="5 GO annotations based on evolutionary models"/>
</dbReference>
<dbReference type="PhylomeDB" id="Q8NAG6"/>
<dbReference type="TreeFam" id="TF319333"/>
<dbReference type="PathwayCommons" id="Q8NAG6"/>
<dbReference type="BioGRID-ORCS" id="126549">
    <property type="hits" value="18 hits in 1038 CRISPR screens"/>
</dbReference>
<dbReference type="ChiTaRS" id="ANKLE1">
    <property type="organism name" value="human"/>
</dbReference>
<dbReference type="GenomeRNAi" id="126549"/>
<dbReference type="Pharos" id="Q8NAG6">
    <property type="development level" value="Tbio"/>
</dbReference>
<dbReference type="PRO" id="PR:Q8NAG6"/>
<dbReference type="Proteomes" id="UP000005640">
    <property type="component" value="Chromosome 19"/>
</dbReference>
<dbReference type="RNAct" id="Q8NAG6">
    <property type="molecule type" value="protein"/>
</dbReference>
<dbReference type="Bgee" id="ENSG00000160117">
    <property type="expression patterns" value="Expressed in male germ line stem cell (sensu Vertebrata) in testis and 98 other cell types or tissues"/>
</dbReference>
<dbReference type="ExpressionAtlas" id="Q8NAG6">
    <property type="expression patterns" value="baseline and differential"/>
</dbReference>
<dbReference type="GO" id="GO:0005737">
    <property type="term" value="C:cytoplasm"/>
    <property type="evidence" value="ECO:0000314"/>
    <property type="project" value="UniProtKB"/>
</dbReference>
<dbReference type="GO" id="GO:0005829">
    <property type="term" value="C:cytosol"/>
    <property type="evidence" value="ECO:0000314"/>
    <property type="project" value="HPA"/>
</dbReference>
<dbReference type="GO" id="GO:0005654">
    <property type="term" value="C:nucleoplasm"/>
    <property type="evidence" value="ECO:0000314"/>
    <property type="project" value="HPA"/>
</dbReference>
<dbReference type="GO" id="GO:0004520">
    <property type="term" value="F:DNA endonuclease activity"/>
    <property type="evidence" value="ECO:0000318"/>
    <property type="project" value="GO_Central"/>
</dbReference>
<dbReference type="GO" id="GO:0004519">
    <property type="term" value="F:endonuclease activity"/>
    <property type="evidence" value="ECO:0000314"/>
    <property type="project" value="UniProtKB"/>
</dbReference>
<dbReference type="GO" id="GO:0006974">
    <property type="term" value="P:DNA damage response"/>
    <property type="evidence" value="ECO:0000314"/>
    <property type="project" value="UniProtKB"/>
</dbReference>
<dbReference type="GO" id="GO:0000724">
    <property type="term" value="P:double-strand break repair via homologous recombination"/>
    <property type="evidence" value="ECO:0000318"/>
    <property type="project" value="GO_Central"/>
</dbReference>
<dbReference type="GO" id="GO:0045950">
    <property type="term" value="P:negative regulation of mitotic recombination"/>
    <property type="evidence" value="ECO:0007669"/>
    <property type="project" value="Ensembl"/>
</dbReference>
<dbReference type="GO" id="GO:0090304">
    <property type="term" value="P:nucleic acid metabolic process"/>
    <property type="evidence" value="ECO:0000305"/>
    <property type="project" value="UniProtKB"/>
</dbReference>
<dbReference type="GO" id="GO:0006611">
    <property type="term" value="P:protein export from nucleus"/>
    <property type="evidence" value="ECO:0000314"/>
    <property type="project" value="UniProtKB"/>
</dbReference>
<dbReference type="GO" id="GO:1905456">
    <property type="term" value="P:regulation of lymphoid progenitor cell differentiation"/>
    <property type="evidence" value="ECO:0007669"/>
    <property type="project" value="Ensembl"/>
</dbReference>
<dbReference type="GO" id="GO:1905453">
    <property type="term" value="P:regulation of myeloid progenitor cell differentiation"/>
    <property type="evidence" value="ECO:0007669"/>
    <property type="project" value="Ensembl"/>
</dbReference>
<dbReference type="GO" id="GO:0000712">
    <property type="term" value="P:resolution of meiotic recombination intermediates"/>
    <property type="evidence" value="ECO:0000318"/>
    <property type="project" value="GO_Central"/>
</dbReference>
<dbReference type="CDD" id="cd10454">
    <property type="entry name" value="GIY-YIG_COG3680_Meta"/>
    <property type="match status" value="1"/>
</dbReference>
<dbReference type="CDD" id="cd12943">
    <property type="entry name" value="LEM_ANKL1"/>
    <property type="match status" value="1"/>
</dbReference>
<dbReference type="FunFam" id="1.25.40.20:FF:000627">
    <property type="entry name" value="Ankyrin repeat and LEM domain containing 1"/>
    <property type="match status" value="1"/>
</dbReference>
<dbReference type="Gene3D" id="1.10.720.40">
    <property type="match status" value="1"/>
</dbReference>
<dbReference type="Gene3D" id="1.25.40.20">
    <property type="entry name" value="Ankyrin repeat-containing domain"/>
    <property type="match status" value="1"/>
</dbReference>
<dbReference type="InterPro" id="IPR034998">
    <property type="entry name" value="ANKLE1"/>
</dbReference>
<dbReference type="InterPro" id="IPR002110">
    <property type="entry name" value="Ankyrin_rpt"/>
</dbReference>
<dbReference type="InterPro" id="IPR036770">
    <property type="entry name" value="Ankyrin_rpt-contain_sf"/>
</dbReference>
<dbReference type="InterPro" id="IPR000305">
    <property type="entry name" value="GIY-YIG_endonuc"/>
</dbReference>
<dbReference type="InterPro" id="IPR011015">
    <property type="entry name" value="LEM/LEM-like_dom_sf"/>
</dbReference>
<dbReference type="InterPro" id="IPR003887">
    <property type="entry name" value="LEM_dom"/>
</dbReference>
<dbReference type="PANTHER" id="PTHR46427">
    <property type="entry name" value="ANKYRIN REPEAT AND LEM DOMAIN-CONTAINING PROTEIN 1"/>
    <property type="match status" value="1"/>
</dbReference>
<dbReference type="PANTHER" id="PTHR46427:SF1">
    <property type="entry name" value="ANKYRIN REPEAT AND LEM DOMAIN-CONTAINING PROTEIN 1"/>
    <property type="match status" value="1"/>
</dbReference>
<dbReference type="Pfam" id="PF12796">
    <property type="entry name" value="Ank_2"/>
    <property type="match status" value="1"/>
</dbReference>
<dbReference type="Pfam" id="PF22945">
    <property type="entry name" value="LEM-3_GIY-YIG"/>
    <property type="match status" value="1"/>
</dbReference>
<dbReference type="SMART" id="SM00248">
    <property type="entry name" value="ANK"/>
    <property type="match status" value="3"/>
</dbReference>
<dbReference type="SUPFAM" id="SSF48403">
    <property type="entry name" value="Ankyrin repeat"/>
    <property type="match status" value="1"/>
</dbReference>
<dbReference type="SUPFAM" id="SSF63451">
    <property type="entry name" value="LEM domain"/>
    <property type="match status" value="1"/>
</dbReference>
<dbReference type="PROSITE" id="PS50297">
    <property type="entry name" value="ANK_REP_REGION"/>
    <property type="match status" value="1"/>
</dbReference>
<dbReference type="PROSITE" id="PS50088">
    <property type="entry name" value="ANK_REPEAT"/>
    <property type="match status" value="2"/>
</dbReference>
<dbReference type="PROSITE" id="PS50164">
    <property type="entry name" value="GIY_YIG"/>
    <property type="match status" value="1"/>
</dbReference>
<dbReference type="PROSITE" id="PS50954">
    <property type="entry name" value="LEM"/>
    <property type="match status" value="1"/>
</dbReference>
<sequence length="615" mass="66890">MCSEARLARRLRDALREEEPWAVEELLRCGADPNLVLEDGAAAVHLAAGARHPRGLRCLGALLRQGGDPNARSVEALTPLHVAAAWGCRRGLELLLSQGADPALRDQDGLRPLDLALQQGHLECARVLQDLDTRTRTRTRIGAETQEPEPAPGTPGLSGPTDETLDSIALQKQPCRGDNRDIGLEADPGPPSLPVPLETVDKHGSSASPPGHWDYSSDASFVTAVEVSGAEDPASDTPPWAGSLPPTRQGLLHVVHANQRVPRSQGTEAELNARLQALTLTPPNAAGFQSSPSSMPLLDRSPAHSPPRTPTPGASDCHCLWEHQTSIDSDMATLWLTEDEASSTGGREPVGPCRHLPVSTVSDLELLKGLRALGENPHPITPFTRQLYHQQLEEAQIAPGPEFSGHSLELAAALRTGCIPDVQADEDALAQQFEQPDPARRWREGVVKSSFTYLLLDPRETQDLPARAFSLTPAERLQTFIRAIFYVGKGTRARPYVHLWEALGHHGRSRKQPHQACPKVRQILDIWASGCGVVSLHCFQHVVAVEAYTREACIVEALGIQTLTNQKQGHCYGVVAGWPPARRRRLGVHLLHRALLVFLAEGERQLHPQDIQARG</sequence>
<name>ANKL1_HUMAN</name>
<organism>
    <name type="scientific">Homo sapiens</name>
    <name type="common">Human</name>
    <dbReference type="NCBI Taxonomy" id="9606"/>
    <lineage>
        <taxon>Eukaryota</taxon>
        <taxon>Metazoa</taxon>
        <taxon>Chordata</taxon>
        <taxon>Craniata</taxon>
        <taxon>Vertebrata</taxon>
        <taxon>Euteleostomi</taxon>
        <taxon>Mammalia</taxon>
        <taxon>Eutheria</taxon>
        <taxon>Euarchontoglires</taxon>
        <taxon>Primates</taxon>
        <taxon>Haplorrhini</taxon>
        <taxon>Catarrhini</taxon>
        <taxon>Hominidae</taxon>
        <taxon>Homo</taxon>
    </lineage>
</organism>
<keyword id="KW-0025">Alternative splicing</keyword>
<keyword id="KW-0040">ANK repeat</keyword>
<keyword id="KW-0963">Cytoplasm</keyword>
<keyword id="KW-0227">DNA damage</keyword>
<keyword id="KW-0234">DNA repair</keyword>
<keyword id="KW-0255">Endonuclease</keyword>
<keyword id="KW-0378">Hydrolase</keyword>
<keyword id="KW-0540">Nuclease</keyword>
<keyword id="KW-0539">Nucleus</keyword>
<keyword id="KW-1267">Proteomics identification</keyword>
<keyword id="KW-1185">Reference proteome</keyword>
<keyword id="KW-0677">Repeat</keyword>
<reference key="1">
    <citation type="submission" date="2007-10" db="EMBL/GenBank/DDBJ databases">
        <title>LEM3 is a novel LEM-domain containing protein.</title>
        <authorList>
            <person name="Brachner A."/>
            <person name="Foisner R."/>
            <person name="Gotzmann J."/>
        </authorList>
    </citation>
    <scope>NUCLEOTIDE SEQUENCE [MRNA]</scope>
    <scope>VARIANTS THR-31; VAL-71; GLN-94; TRP-184; PRO-311 AND ARG-435</scope>
</reference>
<reference key="2">
    <citation type="journal article" date="2004" name="Nat. Genet.">
        <title>Complete sequencing and characterization of 21,243 full-length human cDNAs.</title>
        <authorList>
            <person name="Ota T."/>
            <person name="Suzuki Y."/>
            <person name="Nishikawa T."/>
            <person name="Otsuki T."/>
            <person name="Sugiyama T."/>
            <person name="Irie R."/>
            <person name="Wakamatsu A."/>
            <person name="Hayashi K."/>
            <person name="Sato H."/>
            <person name="Nagai K."/>
            <person name="Kimura K."/>
            <person name="Makita H."/>
            <person name="Sekine M."/>
            <person name="Obayashi M."/>
            <person name="Nishi T."/>
            <person name="Shibahara T."/>
            <person name="Tanaka T."/>
            <person name="Ishii S."/>
            <person name="Yamamoto J."/>
            <person name="Saito K."/>
            <person name="Kawai Y."/>
            <person name="Isono Y."/>
            <person name="Nakamura Y."/>
            <person name="Nagahari K."/>
            <person name="Murakami K."/>
            <person name="Yasuda T."/>
            <person name="Iwayanagi T."/>
            <person name="Wagatsuma M."/>
            <person name="Shiratori A."/>
            <person name="Sudo H."/>
            <person name="Hosoiri T."/>
            <person name="Kaku Y."/>
            <person name="Kodaira H."/>
            <person name="Kondo H."/>
            <person name="Sugawara M."/>
            <person name="Takahashi M."/>
            <person name="Kanda K."/>
            <person name="Yokoi T."/>
            <person name="Furuya T."/>
            <person name="Kikkawa E."/>
            <person name="Omura Y."/>
            <person name="Abe K."/>
            <person name="Kamihara K."/>
            <person name="Katsuta N."/>
            <person name="Sato K."/>
            <person name="Tanikawa M."/>
            <person name="Yamazaki M."/>
            <person name="Ninomiya K."/>
            <person name="Ishibashi T."/>
            <person name="Yamashita H."/>
            <person name="Murakawa K."/>
            <person name="Fujimori K."/>
            <person name="Tanai H."/>
            <person name="Kimata M."/>
            <person name="Watanabe M."/>
            <person name="Hiraoka S."/>
            <person name="Chiba Y."/>
            <person name="Ishida S."/>
            <person name="Ono Y."/>
            <person name="Takiguchi S."/>
            <person name="Watanabe S."/>
            <person name="Yosida M."/>
            <person name="Hotuta T."/>
            <person name="Kusano J."/>
            <person name="Kanehori K."/>
            <person name="Takahashi-Fujii A."/>
            <person name="Hara H."/>
            <person name="Tanase T.-O."/>
            <person name="Nomura Y."/>
            <person name="Togiya S."/>
            <person name="Komai F."/>
            <person name="Hara R."/>
            <person name="Takeuchi K."/>
            <person name="Arita M."/>
            <person name="Imose N."/>
            <person name="Musashino K."/>
            <person name="Yuuki H."/>
            <person name="Oshima A."/>
            <person name="Sasaki N."/>
            <person name="Aotsuka S."/>
            <person name="Yoshikawa Y."/>
            <person name="Matsunawa H."/>
            <person name="Ichihara T."/>
            <person name="Shiohata N."/>
            <person name="Sano S."/>
            <person name="Moriya S."/>
            <person name="Momiyama H."/>
            <person name="Satoh N."/>
            <person name="Takami S."/>
            <person name="Terashima Y."/>
            <person name="Suzuki O."/>
            <person name="Nakagawa S."/>
            <person name="Senoh A."/>
            <person name="Mizoguchi H."/>
            <person name="Goto Y."/>
            <person name="Shimizu F."/>
            <person name="Wakebe H."/>
            <person name="Hishigaki H."/>
            <person name="Watanabe T."/>
            <person name="Sugiyama A."/>
            <person name="Takemoto M."/>
            <person name="Kawakami B."/>
            <person name="Yamazaki M."/>
            <person name="Watanabe K."/>
            <person name="Kumagai A."/>
            <person name="Itakura S."/>
            <person name="Fukuzumi Y."/>
            <person name="Fujimori Y."/>
            <person name="Komiyama M."/>
            <person name="Tashiro H."/>
            <person name="Tanigami A."/>
            <person name="Fujiwara T."/>
            <person name="Ono T."/>
            <person name="Yamada K."/>
            <person name="Fujii Y."/>
            <person name="Ozaki K."/>
            <person name="Hirao M."/>
            <person name="Ohmori Y."/>
            <person name="Kawabata A."/>
            <person name="Hikiji T."/>
            <person name="Kobatake N."/>
            <person name="Inagaki H."/>
            <person name="Ikema Y."/>
            <person name="Okamoto S."/>
            <person name="Okitani R."/>
            <person name="Kawakami T."/>
            <person name="Noguchi S."/>
            <person name="Itoh T."/>
            <person name="Shigeta K."/>
            <person name="Senba T."/>
            <person name="Matsumura K."/>
            <person name="Nakajima Y."/>
            <person name="Mizuno T."/>
            <person name="Morinaga M."/>
            <person name="Sasaki M."/>
            <person name="Togashi T."/>
            <person name="Oyama M."/>
            <person name="Hata H."/>
            <person name="Watanabe M."/>
            <person name="Komatsu T."/>
            <person name="Mizushima-Sugano J."/>
            <person name="Satoh T."/>
            <person name="Shirai Y."/>
            <person name="Takahashi Y."/>
            <person name="Nakagawa K."/>
            <person name="Okumura K."/>
            <person name="Nagase T."/>
            <person name="Nomura N."/>
            <person name="Kikuchi H."/>
            <person name="Masuho Y."/>
            <person name="Yamashita R."/>
            <person name="Nakai K."/>
            <person name="Yada T."/>
            <person name="Nakamura Y."/>
            <person name="Ohara O."/>
            <person name="Isogai T."/>
            <person name="Sugano S."/>
        </authorList>
    </citation>
    <scope>NUCLEOTIDE SEQUENCE [LARGE SCALE MRNA] (ISOFORM 2)</scope>
    <scope>NUCLEOTIDE SEQUENCE [LARGE SCALE MRNA] OF 253-615 (ISOFORM 1)</scope>
    <scope>VARIANTS VAL-71; PRO-311 AND ARG-435</scope>
</reference>
<reference key="3">
    <citation type="journal article" date="2004" name="Nature">
        <title>The DNA sequence and biology of human chromosome 19.</title>
        <authorList>
            <person name="Grimwood J."/>
            <person name="Gordon L.A."/>
            <person name="Olsen A.S."/>
            <person name="Terry A."/>
            <person name="Schmutz J."/>
            <person name="Lamerdin J.E."/>
            <person name="Hellsten U."/>
            <person name="Goodstein D."/>
            <person name="Couronne O."/>
            <person name="Tran-Gyamfi M."/>
            <person name="Aerts A."/>
            <person name="Altherr M."/>
            <person name="Ashworth L."/>
            <person name="Bajorek E."/>
            <person name="Black S."/>
            <person name="Branscomb E."/>
            <person name="Caenepeel S."/>
            <person name="Carrano A.V."/>
            <person name="Caoile C."/>
            <person name="Chan Y.M."/>
            <person name="Christensen M."/>
            <person name="Cleland C.A."/>
            <person name="Copeland A."/>
            <person name="Dalin E."/>
            <person name="Dehal P."/>
            <person name="Denys M."/>
            <person name="Detter J.C."/>
            <person name="Escobar J."/>
            <person name="Flowers D."/>
            <person name="Fotopulos D."/>
            <person name="Garcia C."/>
            <person name="Georgescu A.M."/>
            <person name="Glavina T."/>
            <person name="Gomez M."/>
            <person name="Gonzales E."/>
            <person name="Groza M."/>
            <person name="Hammon N."/>
            <person name="Hawkins T."/>
            <person name="Haydu L."/>
            <person name="Ho I."/>
            <person name="Huang W."/>
            <person name="Israni S."/>
            <person name="Jett J."/>
            <person name="Kadner K."/>
            <person name="Kimball H."/>
            <person name="Kobayashi A."/>
            <person name="Larionov V."/>
            <person name="Leem S.-H."/>
            <person name="Lopez F."/>
            <person name="Lou Y."/>
            <person name="Lowry S."/>
            <person name="Malfatti S."/>
            <person name="Martinez D."/>
            <person name="McCready P.M."/>
            <person name="Medina C."/>
            <person name="Morgan J."/>
            <person name="Nelson K."/>
            <person name="Nolan M."/>
            <person name="Ovcharenko I."/>
            <person name="Pitluck S."/>
            <person name="Pollard M."/>
            <person name="Popkie A.P."/>
            <person name="Predki P."/>
            <person name="Quan G."/>
            <person name="Ramirez L."/>
            <person name="Rash S."/>
            <person name="Retterer J."/>
            <person name="Rodriguez A."/>
            <person name="Rogers S."/>
            <person name="Salamov A."/>
            <person name="Salazar A."/>
            <person name="She X."/>
            <person name="Smith D."/>
            <person name="Slezak T."/>
            <person name="Solovyev V."/>
            <person name="Thayer N."/>
            <person name="Tice H."/>
            <person name="Tsai M."/>
            <person name="Ustaszewska A."/>
            <person name="Vo N."/>
            <person name="Wagner M."/>
            <person name="Wheeler J."/>
            <person name="Wu K."/>
            <person name="Xie G."/>
            <person name="Yang J."/>
            <person name="Dubchak I."/>
            <person name="Furey T.S."/>
            <person name="DeJong P."/>
            <person name="Dickson M."/>
            <person name="Gordon D."/>
            <person name="Eichler E.E."/>
            <person name="Pennacchio L.A."/>
            <person name="Richardson P."/>
            <person name="Stubbs L."/>
            <person name="Rokhsar D.S."/>
            <person name="Myers R.M."/>
            <person name="Rubin E.M."/>
            <person name="Lucas S.M."/>
        </authorList>
    </citation>
    <scope>NUCLEOTIDE SEQUENCE [LARGE SCALE GENOMIC DNA]</scope>
</reference>
<reference key="4">
    <citation type="journal article" date="2012" name="J. Cell Sci.">
        <title>The endonuclease Ankle1 requires its LEM and GIY-YIG motifs for DNA cleavage in vivo.</title>
        <authorList>
            <person name="Brachner A."/>
            <person name="Braun J."/>
            <person name="Ghodgaonkar M."/>
            <person name="Castor D."/>
            <person name="Zlopasa L."/>
            <person name="Ehrlich V."/>
            <person name="Jiricny J."/>
            <person name="Gotzmann J."/>
            <person name="Knasmueller S."/>
            <person name="Foisner R."/>
        </authorList>
    </citation>
    <scope>FUNCTION</scope>
    <scope>CATALYTIC ACTIVITY</scope>
    <scope>INTERACTION WITH BANF1</scope>
    <scope>SUBCELLULAR LOCATION</scope>
    <scope>TISSUE SPECIFICITY</scope>
    <scope>DEVELOPMENTAL STAGE</scope>
    <scope>DOMAIN</scope>
    <scope>MUTAGENESIS OF TYR-453; GLY-488 AND GLU-551</scope>
</reference>
<reference key="5">
    <citation type="journal article" date="2016" name="BMC Cell Biol.">
        <title>Nucleo-cytoplasmic shuttling of the endonuclease ankyrin repeats and LEM domain-containing protein 1 (Ankle1) is mediated by canonical nuclear export- and nuclear import signals.</title>
        <authorList>
            <person name="Zlopasa L."/>
            <person name="Brachner A."/>
            <person name="Foisner R."/>
        </authorList>
    </citation>
    <scope>FUNCTION</scope>
    <scope>SUBCELLULAR LOCATION</scope>
    <scope>NUCLEAR EXPORT SIGNAL</scope>
    <scope>NUCLEAR LOCALIZATION SIGNAL</scope>
    <scope>MUTAGENESIS OF 110-LEU--LEU-117; 271-LEU--LEU-280 AND 486-TYR--GLY-488</scope>
</reference>
<gene>
    <name type="primary">ANKLE1</name>
    <name type="synonym">ANKRD41</name>
    <name type="synonym">LEM3</name>
</gene>
<accession>Q8NAG6</accession>
<accession>A8VU82</accession>
<accession>Q8N8J8</accession>